<dbReference type="EC" id="7.1.2.2"/>
<dbReference type="EMBL" id="U36939">
    <property type="protein sequence ID" value="AAB60306.1"/>
    <property type="molecule type" value="mRNA"/>
</dbReference>
<dbReference type="PIR" id="T04409">
    <property type="entry name" value="T04409"/>
</dbReference>
<dbReference type="SMR" id="Q40002"/>
<dbReference type="ExpressionAtlas" id="Q40002">
    <property type="expression patterns" value="baseline and differential"/>
</dbReference>
<dbReference type="GO" id="GO:0000325">
    <property type="term" value="C:plant-type vacuole"/>
    <property type="evidence" value="ECO:0007669"/>
    <property type="project" value="TreeGrafter"/>
</dbReference>
<dbReference type="GO" id="GO:0033180">
    <property type="term" value="C:proton-transporting V-type ATPase, V1 domain"/>
    <property type="evidence" value="ECO:0007669"/>
    <property type="project" value="InterPro"/>
</dbReference>
<dbReference type="GO" id="GO:0005524">
    <property type="term" value="F:ATP binding"/>
    <property type="evidence" value="ECO:0007669"/>
    <property type="project" value="UniProtKB-KW"/>
</dbReference>
<dbReference type="GO" id="GO:0016887">
    <property type="term" value="F:ATP hydrolysis activity"/>
    <property type="evidence" value="ECO:0007669"/>
    <property type="project" value="InterPro"/>
</dbReference>
<dbReference type="GO" id="GO:0046961">
    <property type="term" value="F:proton-transporting ATPase activity, rotational mechanism"/>
    <property type="evidence" value="ECO:0007669"/>
    <property type="project" value="InterPro"/>
</dbReference>
<dbReference type="GO" id="GO:0046034">
    <property type="term" value="P:ATP metabolic process"/>
    <property type="evidence" value="ECO:0007669"/>
    <property type="project" value="InterPro"/>
</dbReference>
<dbReference type="CDD" id="cd18111">
    <property type="entry name" value="ATP-synt_V_A-type_alpha_C"/>
    <property type="match status" value="1"/>
</dbReference>
<dbReference type="CDD" id="cd01134">
    <property type="entry name" value="V_A-ATPase_A"/>
    <property type="match status" value="1"/>
</dbReference>
<dbReference type="FunFam" id="1.10.1140.10:FF:000002">
    <property type="entry name" value="V-type proton ATPase catalytic subunit A"/>
    <property type="match status" value="1"/>
</dbReference>
<dbReference type="FunFam" id="2.40.50.100:FF:000008">
    <property type="entry name" value="V-type proton ATPase catalytic subunit A"/>
    <property type="match status" value="1"/>
</dbReference>
<dbReference type="FunFam" id="3.40.50.300:FF:000052">
    <property type="entry name" value="V-type proton ATPase catalytic subunit A"/>
    <property type="match status" value="1"/>
</dbReference>
<dbReference type="Gene3D" id="2.30.30.650">
    <property type="match status" value="1"/>
</dbReference>
<dbReference type="Gene3D" id="2.40.50.100">
    <property type="match status" value="1"/>
</dbReference>
<dbReference type="Gene3D" id="1.10.1140.10">
    <property type="entry name" value="Bovine Mitochondrial F1-atpase, Atp Synthase Beta Chain, Chain D, domain 3"/>
    <property type="match status" value="1"/>
</dbReference>
<dbReference type="Gene3D" id="3.40.50.300">
    <property type="entry name" value="P-loop containing nucleotide triphosphate hydrolases"/>
    <property type="match status" value="1"/>
</dbReference>
<dbReference type="HAMAP" id="MF_00309">
    <property type="entry name" value="ATP_synth_A_arch"/>
    <property type="match status" value="1"/>
</dbReference>
<dbReference type="InterPro" id="IPR055190">
    <property type="entry name" value="ATP-synt_VA_C"/>
</dbReference>
<dbReference type="InterPro" id="IPR031686">
    <property type="entry name" value="ATP-synth_a_Xtn"/>
</dbReference>
<dbReference type="InterPro" id="IPR020003">
    <property type="entry name" value="ATPase_a/bsu_AS"/>
</dbReference>
<dbReference type="InterPro" id="IPR004100">
    <property type="entry name" value="ATPase_F1/V1/A1_a/bsu_N"/>
</dbReference>
<dbReference type="InterPro" id="IPR036121">
    <property type="entry name" value="ATPase_F1/V1/A1_a/bsu_N_sf"/>
</dbReference>
<dbReference type="InterPro" id="IPR000194">
    <property type="entry name" value="ATPase_F1/V1/A1_a/bsu_nucl-bd"/>
</dbReference>
<dbReference type="InterPro" id="IPR024034">
    <property type="entry name" value="ATPase_F1/V1_b/a_C"/>
</dbReference>
<dbReference type="InterPro" id="IPR005725">
    <property type="entry name" value="ATPase_V1-cplx_asu"/>
</dbReference>
<dbReference type="InterPro" id="IPR027417">
    <property type="entry name" value="P-loop_NTPase"/>
</dbReference>
<dbReference type="InterPro" id="IPR022878">
    <property type="entry name" value="V-ATPase_asu"/>
</dbReference>
<dbReference type="NCBIfam" id="NF003220">
    <property type="entry name" value="PRK04192.1"/>
    <property type="match status" value="1"/>
</dbReference>
<dbReference type="NCBIfam" id="TIGR01042">
    <property type="entry name" value="V-ATPase_V1_A"/>
    <property type="match status" value="1"/>
</dbReference>
<dbReference type="PANTHER" id="PTHR43607">
    <property type="entry name" value="V-TYPE PROTON ATPASE CATALYTIC SUBUNIT A"/>
    <property type="match status" value="1"/>
</dbReference>
<dbReference type="PANTHER" id="PTHR43607:SF4">
    <property type="entry name" value="V-TYPE PROTON ATPASE CATALYTIC SUBUNIT A"/>
    <property type="match status" value="1"/>
</dbReference>
<dbReference type="Pfam" id="PF00006">
    <property type="entry name" value="ATP-synt_ab"/>
    <property type="match status" value="1"/>
</dbReference>
<dbReference type="Pfam" id="PF02874">
    <property type="entry name" value="ATP-synt_ab_N"/>
    <property type="match status" value="1"/>
</dbReference>
<dbReference type="Pfam" id="PF16886">
    <property type="entry name" value="ATP-synt_ab_Xtn"/>
    <property type="match status" value="1"/>
</dbReference>
<dbReference type="Pfam" id="PF22919">
    <property type="entry name" value="ATP-synt_VA_C"/>
    <property type="match status" value="1"/>
</dbReference>
<dbReference type="SUPFAM" id="SSF47917">
    <property type="entry name" value="C-terminal domain of alpha and beta subunits of F1 ATP synthase"/>
    <property type="match status" value="1"/>
</dbReference>
<dbReference type="SUPFAM" id="SSF50615">
    <property type="entry name" value="N-terminal domain of alpha and beta subunits of F1 ATP synthase"/>
    <property type="match status" value="1"/>
</dbReference>
<dbReference type="SUPFAM" id="SSF52540">
    <property type="entry name" value="P-loop containing nucleoside triphosphate hydrolases"/>
    <property type="match status" value="1"/>
</dbReference>
<dbReference type="PROSITE" id="PS00152">
    <property type="entry name" value="ATPASE_ALPHA_BETA"/>
    <property type="match status" value="1"/>
</dbReference>
<proteinExistence type="evidence at transcript level"/>
<keyword id="KW-0067">ATP-binding</keyword>
<keyword id="KW-0375">Hydrogen ion transport</keyword>
<keyword id="KW-0406">Ion transport</keyword>
<keyword id="KW-0547">Nucleotide-binding</keyword>
<keyword id="KW-1278">Translocase</keyword>
<keyword id="KW-0813">Transport</keyword>
<sequence>ELVRVGHDSLIGEIIRLEGDSATIQVYEETAGLTVNDPVLRTKKPLSCELGPGILGNIFDGIQRPLKTIAIKSRDVYIPRGVSVPALDKDQLWEFQPNKLGVGDNITNGDLYATVFENTLMKHHIALPPGAMGKISYIAPAGQYSLQDTVLELEFQGIKKEFTMLHTWPVRTPRPVASKLAADTPLLTGQRVLDALFPSVLGGTCAIPGAFGCGKTVISQALSKYSNSDTVVYVGCGERGNEMAEVLMDFPQLTMTLPDGREESVMKRTTLVANTSNMPVAAREASIYTGITIAEYFRDMGYNVSMMADSTSRWAEALREISGRLAEMPADSGYPAYLASRLASFYERAGKVQCLGSPDRTGSVTIVGAVSPPGGDFSDPVTSATLSIVQVFWGLDKKLAQRKHFPSVNWLISYSKYSTALEGYYEKFDPGFIDMRTKAREVLQREDDLNEIVQLVGKDALGESDKITLETAKLLREDYLAQNAFTPYDKYCPFYKSVWMMRNIIHFNQLANQAVERAANADGHKITYAVVKSRMGDLFYRLVSQKFEDPAEGEDVLVAKFQKLYDDLTAGFRNLEDEAR</sequence>
<reference key="1">
    <citation type="submission" date="1995-11" db="EMBL/GenBank/DDBJ databases">
        <authorList>
            <person name="Dupont F.M."/>
            <person name="Chan R."/>
        </authorList>
    </citation>
    <scope>NUCLEOTIDE SEQUENCE [MRNA]</scope>
    <source>
        <strain>cv. CM 72</strain>
        <tissue>Root</tissue>
    </source>
</reference>
<comment type="function">
    <text>Catalytic subunit of the peripheral V1 complex of vacuolar ATPase. V-ATPase vacuolar ATPase is responsible for acidifying a variety of intracellular compartments in eukaryotic cells.</text>
</comment>
<comment type="catalytic activity">
    <reaction>
        <text>ATP + H2O + 4 H(+)(in) = ADP + phosphate + 5 H(+)(out)</text>
        <dbReference type="Rhea" id="RHEA:57720"/>
        <dbReference type="ChEBI" id="CHEBI:15377"/>
        <dbReference type="ChEBI" id="CHEBI:15378"/>
        <dbReference type="ChEBI" id="CHEBI:30616"/>
        <dbReference type="ChEBI" id="CHEBI:43474"/>
        <dbReference type="ChEBI" id="CHEBI:456216"/>
        <dbReference type="EC" id="7.1.2.2"/>
    </reaction>
</comment>
<comment type="subunit">
    <text>V-ATPase is a heteromultimeric enzyme composed of a peripheral catalytic V1 complex (main components: subunits A, B, C, D, E, and F) attached to an integral membrane V0 proton pore complex (main component: the proteolipid protein).</text>
</comment>
<comment type="similarity">
    <text evidence="2">Belongs to the ATPase alpha/beta chains family.</text>
</comment>
<feature type="chain" id="PRO_0000144581" description="V-type proton ATPase catalytic subunit A">
    <location>
        <begin position="1" status="less than"/>
        <end position="580"/>
    </location>
</feature>
<feature type="binding site" evidence="1">
    <location>
        <begin position="209"/>
        <end position="216"/>
    </location>
    <ligand>
        <name>ATP</name>
        <dbReference type="ChEBI" id="CHEBI:30616"/>
    </ligand>
</feature>
<feature type="non-terminal residue">
    <location>
        <position position="1"/>
    </location>
</feature>
<organism>
    <name type="scientific">Hordeum vulgare</name>
    <name type="common">Barley</name>
    <dbReference type="NCBI Taxonomy" id="4513"/>
    <lineage>
        <taxon>Eukaryota</taxon>
        <taxon>Viridiplantae</taxon>
        <taxon>Streptophyta</taxon>
        <taxon>Embryophyta</taxon>
        <taxon>Tracheophyta</taxon>
        <taxon>Spermatophyta</taxon>
        <taxon>Magnoliopsida</taxon>
        <taxon>Liliopsida</taxon>
        <taxon>Poales</taxon>
        <taxon>Poaceae</taxon>
        <taxon>BOP clade</taxon>
        <taxon>Pooideae</taxon>
        <taxon>Triticodae</taxon>
        <taxon>Triticeae</taxon>
        <taxon>Hordeinae</taxon>
        <taxon>Hordeum</taxon>
    </lineage>
</organism>
<protein>
    <recommendedName>
        <fullName>V-type proton ATPase catalytic subunit A</fullName>
        <shortName>V-ATPase subunit A</shortName>
        <ecNumber>7.1.2.2</ecNumber>
    </recommendedName>
    <alternativeName>
        <fullName>V-ATPase 69 kDa subunit</fullName>
    </alternativeName>
    <alternativeName>
        <fullName>Vacuolar proton pump subunit alpha</fullName>
    </alternativeName>
</protein>
<evidence type="ECO:0000255" key="1"/>
<evidence type="ECO:0000305" key="2"/>
<accession>Q40002</accession>
<name>VATA_HORVU</name>